<protein>
    <recommendedName>
        <fullName evidence="11">Transcription initiation factor TFIID subunit 4</fullName>
    </recommendedName>
    <alternativeName>
        <fullName evidence="14">TBP-associated transcription factor family member taf-4</fullName>
    </alternativeName>
</protein>
<gene>
    <name evidence="14" type="primary">taf-4</name>
    <name evidence="8" type="synonym">taf-5</name>
    <name evidence="14" type="ORF">R119.6</name>
</gene>
<proteinExistence type="evidence at protein level"/>
<keyword id="KW-0963">Cytoplasm</keyword>
<keyword id="KW-0539">Nucleus</keyword>
<keyword id="KW-1185">Reference proteome</keyword>
<keyword id="KW-0804">Transcription</keyword>
<keyword id="KW-0805">Transcription regulation</keyword>
<organism evidence="13">
    <name type="scientific">Caenorhabditis elegans</name>
    <dbReference type="NCBI Taxonomy" id="6239"/>
    <lineage>
        <taxon>Eukaryota</taxon>
        <taxon>Metazoa</taxon>
        <taxon>Ecdysozoa</taxon>
        <taxon>Nematoda</taxon>
        <taxon>Chromadorea</taxon>
        <taxon>Rhabditida</taxon>
        <taxon>Rhabditina</taxon>
        <taxon>Rhabditomorpha</taxon>
        <taxon>Rhabditoidea</taxon>
        <taxon>Rhabditidae</taxon>
        <taxon>Peloderinae</taxon>
        <taxon>Caenorhabditis</taxon>
    </lineage>
</organism>
<comment type="function">
    <text evidence="1 4 5 6 7">The TFIID basal transcription factor complex plays a major role in the initiation of RNA polymerase II (Pol II)-dependent transcription (By similarity). TFIID recognizes and binds promoters via its subunit tbp-1, a TATA-box-binding protein, and promotes assembly of the pre-initiation complex (PIC) (By similarity). The TFIID complex consists of tbp-1 and TBP-associated factors (TAFs), including taf-4 (By similarity). Essential for early embryonic development, probably acting via activating transcription initiation by RNA polymerase II, as part of the TFIID complex (PubMed:11566890, PubMed:18854162). In early embryos, but not oocytes, remains, presumably inactive, in the cytoplasm as a result of binding to oma-1 (PubMed:18854162). Upon degradation of oma-1, taf-4 is released and bound by taf-12, and the taf-4/12 heterodimer translocates to the nucleus and transcriptional repression is relieved (PubMed:18854162). Involved in lifespan extension in a manner dependent upon mitochondrial function (PubMed:24107417). Plays a role in modulating polyribosome formation (PubMed:30198021).</text>
</comment>
<comment type="subunit">
    <text evidence="1 5">Component of the TFIID basal transcription factor complex, composed of TATA-box-binding protein tbp-1, and a number of TBP-associated factors (TAFs) (By similarity). Interacts (via histone-fold domain) with oma-1 (via histone-fold domain) (PubMed:18854162). May also interact with oma-2 (PubMed:18854162). Interacts (via histone-fold domain) with taf-12 (via the histone-fold domain) (PubMed:18854162).</text>
</comment>
<comment type="interaction">
    <interactant intactId="EBI-2023840">
        <id>O61707</id>
    </interactant>
    <interactant intactId="EBI-327483">
        <id>G5EC86</id>
        <label>oma-1</label>
    </interactant>
    <organismsDiffer>false</organismsDiffer>
    <experiments>5</experiments>
</comment>
<comment type="subcellular location">
    <subcellularLocation>
        <location evidence="2 4 5">Nucleus</location>
    </subcellularLocation>
    <subcellularLocation>
        <location evidence="5">Cytoplasm</location>
    </subcellularLocation>
    <text evidence="5">Localization is ubiquitous in one-cell and early two-cell embryos, then enriched in nucleus in all subsequent embryo stages (PubMed:18854162). Localization to the nucleus is prevented by interaction with oma-1 and is sequestered in the cytoplasm, following fertilization, and thus allows for transcriptional suppression in early embryos, but not in oocytes (PubMed:18854162). Localized to the nucleus in a taf-12-dependent manner (PubMed:18854162).</text>
</comment>
<comment type="developmental stage">
    <text evidence="4 5">Expressed in one-, two- and four-cell embryos and through early morphogenesis (at protein level) (PubMed:11566890, PubMed:18854162). Also expressed in oocytes, and until at least 12-cell stage in embryos (PubMed:18854162).</text>
</comment>
<comment type="domain">
    <text evidence="5">The histone-fold domain mediates hetero-dimer protein-protein interactions.</text>
</comment>
<comment type="disruption phenotype">
    <text evidence="4 6 7">RNAi-mediated knockdown causes arrested development at 90-100 cells and inhibits differentiation (PubMed:11566890). The two E cell daughters (E2 cells), which form the endoderm, divide abnormally early, immediately after the MS2 cells (PubMed:11566890). Phosphorylation of the RNA Pol II large subunit C-terminal domain (CTD) is reduced severely in embryos (PubMed:11566890). Abolishes expression of a range of genes, including let-858, rps-5, hsp16.2, pes-10, cki-2 and sur-5 (PubMed:11566890). RNAi-mediated knockdown in a Rieske iron-sulfur protein isp-1 mutant background abolishes lifespan extension, drastically reduces fertility, and abolishes induction of expression of glutathione S-transferase gst-4 (PubMed:24107417). Knockdown also significantly shortens lifespan in either tpk-1 or clk-1 mutant backgrounds (PubMed:24107417). Causes significant up-regulation of expression of the translation initiation factor eif-1, in a clk-1 mutant background (PubMed:30198021).</text>
</comment>
<comment type="similarity">
    <text evidence="11">Belongs to the TAF4 family.</text>
</comment>
<comment type="caution">
    <text evidence="9 12">Throughout PMID:11566890, the gene name taf-5 is used instead of taf-4, based on an earlier nomenclature; readers should be aware to avoid confusion.</text>
</comment>
<evidence type="ECO:0000250" key="1">
    <source>
        <dbReference type="UniProtKB" id="O00268"/>
    </source>
</evidence>
<evidence type="ECO:0000255" key="2">
    <source>
        <dbReference type="PROSITE-ProRule" id="PRU00440"/>
    </source>
</evidence>
<evidence type="ECO:0000256" key="3">
    <source>
        <dbReference type="SAM" id="MobiDB-lite"/>
    </source>
</evidence>
<evidence type="ECO:0000269" key="4">
    <source>
    </source>
</evidence>
<evidence type="ECO:0000269" key="5">
    <source>
    </source>
</evidence>
<evidence type="ECO:0000269" key="6">
    <source>
    </source>
</evidence>
<evidence type="ECO:0000269" key="7">
    <source>
    </source>
</evidence>
<evidence type="ECO:0000303" key="8">
    <source>
    </source>
</evidence>
<evidence type="ECO:0000303" key="9">
    <source>
    </source>
</evidence>
<evidence type="ECO:0000303" key="10">
    <source>
    </source>
</evidence>
<evidence type="ECO:0000305" key="11"/>
<evidence type="ECO:0000305" key="12">
    <source>
    </source>
</evidence>
<evidence type="ECO:0000312" key="13">
    <source>
        <dbReference type="Proteomes" id="UP000001940"/>
    </source>
</evidence>
<evidence type="ECO:0000312" key="14">
    <source>
        <dbReference type="WormBase" id="R119.6"/>
    </source>
</evidence>
<reference evidence="13" key="1">
    <citation type="journal article" date="1998" name="Science">
        <title>Genome sequence of the nematode C. elegans: a platform for investigating biology.</title>
        <authorList>
            <consortium name="The C. elegans sequencing consortium"/>
        </authorList>
    </citation>
    <scope>NUCLEOTIDE SEQUENCE [LARGE SCALE GENOMIC DNA]</scope>
    <source>
        <strain evidence="13">Bristol N2</strain>
    </source>
</reference>
<reference key="2">
    <citation type="journal article" date="2001" name="EMBO J.">
        <title>Distinct requirements for C.elegans TAF(II)s in early embryonic transcription.</title>
        <authorList>
            <person name="Walker A.K."/>
            <person name="Rothman J.H."/>
            <person name="Shi Y."/>
            <person name="Blackwell T.K."/>
        </authorList>
    </citation>
    <scope>FUNCTION</scope>
    <scope>SUBCELLULAR LOCATION</scope>
    <scope>DEVELOPMENTAL STAGE</scope>
    <scope>DISRUPTION PHENOTYPE</scope>
</reference>
<reference key="3">
    <citation type="journal article" date="2002" name="Genes Dev.">
        <title>A unified nomenclature for TATA box binding protein (TBP)-associated factors (TAFs) involved in RNA polymerase II transcription.</title>
        <authorList>
            <person name="Tora L."/>
        </authorList>
    </citation>
    <scope>NOMENCLATURE</scope>
</reference>
<reference evidence="11" key="4">
    <citation type="journal article" date="2008" name="Cell">
        <title>Global transcriptional repression in C. elegans germline precursors by regulated sequestration of TAF-4.</title>
        <authorList>
            <person name="Guven-Ozkan T."/>
            <person name="Nishi Y."/>
            <person name="Robertson S.M."/>
            <person name="Lin R."/>
        </authorList>
    </citation>
    <scope>FUNCTION</scope>
    <scope>INTERACTION WITH OMA-1 AND TAF-12</scope>
    <scope>SUBCELLULAR LOCATION</scope>
    <scope>DOMAIN</scope>
</reference>
<reference evidence="11" key="5">
    <citation type="journal article" date="2013" name="Aging (Albany NY)">
        <title>TAF-4 is required for the life extension of isp-1, clk-1 and tpk-1 Mit mutants.</title>
        <authorList>
            <person name="Khan M.H."/>
            <person name="Ligon M."/>
            <person name="Hussey L.R."/>
            <person name="Hufnal B."/>
            <person name="Farber R. II"/>
            <person name="Munkacsy E."/>
            <person name="Rodriguez A."/>
            <person name="Dillow A."/>
            <person name="Kahlig E."/>
            <person name="Rea S.L."/>
        </authorList>
    </citation>
    <scope>FUNCTION</scope>
    <scope>DISRUPTION PHENOTYPE</scope>
</reference>
<reference evidence="11" key="6">
    <citation type="journal article" date="2018" name="Life. Sci Alliance">
        <title>Mitochondrial ubiquinone-mediated longevity is marked by reduced cytoplasmic mRNA translation.</title>
        <authorList>
            <person name="Molenaars M."/>
            <person name="Janssens G.E."/>
            <person name="Santermans T."/>
            <person name="Lezzerini M."/>
            <person name="Jelier R."/>
            <person name="MacInnes A.W."/>
            <person name="Houtkooper R.H."/>
        </authorList>
    </citation>
    <scope>FUNCTION</scope>
    <scope>DISRUPTION PHENOTYPE</scope>
</reference>
<dbReference type="EMBL" id="BX284601">
    <property type="protein sequence ID" value="CCD73344.1"/>
    <property type="molecule type" value="Genomic_DNA"/>
</dbReference>
<dbReference type="PIR" id="C87719">
    <property type="entry name" value="C87719"/>
</dbReference>
<dbReference type="RefSeq" id="NP_490728.2">
    <property type="nucleotide sequence ID" value="NM_058327.9"/>
</dbReference>
<dbReference type="SMR" id="O61707"/>
<dbReference type="FunCoup" id="O61707">
    <property type="interactions" value="3079"/>
</dbReference>
<dbReference type="IntAct" id="O61707">
    <property type="interactions" value="3"/>
</dbReference>
<dbReference type="STRING" id="6239.R119.6.1"/>
<dbReference type="PaxDb" id="6239-R119.6"/>
<dbReference type="PeptideAtlas" id="O61707"/>
<dbReference type="EnsemblMetazoa" id="R119.6.1">
    <property type="protein sequence ID" value="R119.6.1"/>
    <property type="gene ID" value="WBGene00006385"/>
</dbReference>
<dbReference type="GeneID" id="171630"/>
<dbReference type="KEGG" id="cel:CELE_R119.6"/>
<dbReference type="UCSC" id="R119.6">
    <property type="organism name" value="c. elegans"/>
</dbReference>
<dbReference type="AGR" id="WB:WBGene00006385"/>
<dbReference type="CTD" id="171630"/>
<dbReference type="WormBase" id="R119.6">
    <property type="protein sequence ID" value="CE39613"/>
    <property type="gene ID" value="WBGene00006385"/>
    <property type="gene designation" value="taf-4"/>
</dbReference>
<dbReference type="eggNOG" id="KOG2341">
    <property type="taxonomic scope" value="Eukaryota"/>
</dbReference>
<dbReference type="GeneTree" id="ENSGT00390000011620"/>
<dbReference type="HOGENOM" id="CLU_520970_0_0_1"/>
<dbReference type="InParanoid" id="O61707"/>
<dbReference type="OMA" id="QMRNANA"/>
<dbReference type="OrthoDB" id="21060at2759"/>
<dbReference type="Reactome" id="R-CEL-674695">
    <property type="pathway name" value="RNA Polymerase II Pre-transcription Events"/>
</dbReference>
<dbReference type="Reactome" id="R-CEL-73776">
    <property type="pathway name" value="RNA Polymerase II Promoter Escape"/>
</dbReference>
<dbReference type="Reactome" id="R-CEL-73779">
    <property type="pathway name" value="RNA Polymerase II Transcription Pre-Initiation And Promoter Opening"/>
</dbReference>
<dbReference type="Reactome" id="R-CEL-75953">
    <property type="pathway name" value="RNA Polymerase II Transcription Initiation"/>
</dbReference>
<dbReference type="Reactome" id="R-CEL-76042">
    <property type="pathway name" value="RNA Polymerase II Transcription Initiation And Promoter Clearance"/>
</dbReference>
<dbReference type="PRO" id="PR:O61707"/>
<dbReference type="Proteomes" id="UP000001940">
    <property type="component" value="Chromosome I"/>
</dbReference>
<dbReference type="Bgee" id="WBGene00006385">
    <property type="expression patterns" value="Expressed in germ line (C elegans) and 4 other cell types or tissues"/>
</dbReference>
<dbReference type="GO" id="GO:0005737">
    <property type="term" value="C:cytoplasm"/>
    <property type="evidence" value="ECO:0000314"/>
    <property type="project" value="WormBase"/>
</dbReference>
<dbReference type="GO" id="GO:0005634">
    <property type="term" value="C:nucleus"/>
    <property type="evidence" value="ECO:0000314"/>
    <property type="project" value="WormBase"/>
</dbReference>
<dbReference type="GO" id="GO:0005669">
    <property type="term" value="C:transcription factor TFIID complex"/>
    <property type="evidence" value="ECO:0000318"/>
    <property type="project" value="GO_Central"/>
</dbReference>
<dbReference type="GO" id="GO:0003677">
    <property type="term" value="F:DNA binding"/>
    <property type="evidence" value="ECO:0000318"/>
    <property type="project" value="GO_Central"/>
</dbReference>
<dbReference type="GO" id="GO:0008340">
    <property type="term" value="P:determination of adult lifespan"/>
    <property type="evidence" value="ECO:0000316"/>
    <property type="project" value="UniProtKB"/>
</dbReference>
<dbReference type="GO" id="GO:0009792">
    <property type="term" value="P:embryo development ending in birth or egg hatching"/>
    <property type="evidence" value="ECO:0000315"/>
    <property type="project" value="WormBase"/>
</dbReference>
<dbReference type="GO" id="GO:0009794">
    <property type="term" value="P:regulation of mitotic cell cycle, embryonic"/>
    <property type="evidence" value="ECO:0000315"/>
    <property type="project" value="WormBase"/>
</dbReference>
<dbReference type="GO" id="GO:0006367">
    <property type="term" value="P:transcription initiation at RNA polymerase II promoter"/>
    <property type="evidence" value="ECO:0000315"/>
    <property type="project" value="WormBase"/>
</dbReference>
<dbReference type="CDD" id="cd08045">
    <property type="entry name" value="HFD_TAF4"/>
    <property type="match status" value="1"/>
</dbReference>
<dbReference type="Gene3D" id="1.20.120.1110">
    <property type="entry name" value="TAFH/NHR1 domain"/>
    <property type="match status" value="1"/>
</dbReference>
<dbReference type="InterPro" id="IPR045144">
    <property type="entry name" value="TAF4"/>
</dbReference>
<dbReference type="InterPro" id="IPR007900">
    <property type="entry name" value="TAF4_C"/>
</dbReference>
<dbReference type="InterPro" id="IPR037249">
    <property type="entry name" value="TAFH/NHR1_dom_sf"/>
</dbReference>
<dbReference type="InterPro" id="IPR003894">
    <property type="entry name" value="TAFH_NHR1"/>
</dbReference>
<dbReference type="PANTHER" id="PTHR15138">
    <property type="entry name" value="TRANSCRIPTION INITIATION FACTOR TFIID SUBUNIT 4"/>
    <property type="match status" value="1"/>
</dbReference>
<dbReference type="PANTHER" id="PTHR15138:SF14">
    <property type="entry name" value="TRANSCRIPTION INITIATION FACTOR TFIID SUBUNIT 4"/>
    <property type="match status" value="1"/>
</dbReference>
<dbReference type="Pfam" id="PF05236">
    <property type="entry name" value="TAF4"/>
    <property type="match status" value="1"/>
</dbReference>
<dbReference type="Pfam" id="PF07531">
    <property type="entry name" value="TAFH"/>
    <property type="match status" value="1"/>
</dbReference>
<dbReference type="SMART" id="SM00549">
    <property type="entry name" value="TAFH"/>
    <property type="match status" value="1"/>
</dbReference>
<dbReference type="SUPFAM" id="SSF158553">
    <property type="entry name" value="TAFH domain-like"/>
    <property type="match status" value="1"/>
</dbReference>
<dbReference type="PROSITE" id="PS51119">
    <property type="entry name" value="TAFH"/>
    <property type="match status" value="1"/>
</dbReference>
<name>TAF4_CAEEL</name>
<sequence>MSLPRFRLVQGKAIGERSTPGVSTPEPAPPQIKQEVDYQDAHQMAPEPVEAPQAQNHQMQPPRQPIQQQMQHFQSPSPMAPQGPPGTPQNSAAAAAAASDDKNVTKCVRFLKTLINLSNNDDPEMPDKAARVKELIRGVIYLETTAEEFTRNLQQVLKSQAQPHLLPFLQNTLPALRNAVRNGTASVEGVNPPPGYVFNNGRTPGPPQPPPPQQQSQQQPPLEMRQIPNPNQIPPQMVQGGPHMVSVGARPMIRPMGPGGPSPMGLQGPVRGPMGHQMVQMHPPPPPQQIQQQHPAPPVEMEVEENLQPTAAATATRQYPEGSLKSSILKPDEVLNRITKRMMSSCSVEEEALVAISDAVESHLRELITLMAGVAEHRVESLRIPENYVAIDDVKRQLRFLEDLDRQEEELRESREKESLIRMSKNKNSGKETIEKAKEMQRQDAEAKRNRDANAAAIAALSSNKTVKNKWENTGAATTAPRPRTVRVTTRDLHLLVNQDSRFTGTFIREKMSYGGPAVDTTI</sequence>
<feature type="chain" id="PRO_0000454929" description="Transcription initiation factor TFIID subunit 4">
    <location>
        <begin position="1"/>
        <end position="523"/>
    </location>
</feature>
<feature type="domain" description="TAFH" evidence="2">
    <location>
        <begin position="101"/>
        <end position="199"/>
    </location>
</feature>
<feature type="region of interest" description="Disordered" evidence="3">
    <location>
        <begin position="1"/>
        <end position="100"/>
    </location>
</feature>
<feature type="region of interest" description="Disordered" evidence="3">
    <location>
        <begin position="185"/>
        <end position="241"/>
    </location>
</feature>
<feature type="region of interest" description="Histone-fold" evidence="10">
    <location>
        <begin position="329"/>
        <end position="383"/>
    </location>
</feature>
<feature type="region of interest" description="Necessary and sufficient for interaction with oma-1" evidence="5">
    <location>
        <begin position="333"/>
        <end position="382"/>
    </location>
</feature>
<feature type="region of interest" description="Disordered" evidence="3">
    <location>
        <begin position="407"/>
        <end position="435"/>
    </location>
</feature>
<feature type="compositionally biased region" description="Low complexity" evidence="3">
    <location>
        <begin position="58"/>
        <end position="77"/>
    </location>
</feature>
<feature type="compositionally biased region" description="Pro residues" evidence="3">
    <location>
        <begin position="78"/>
        <end position="87"/>
    </location>
</feature>
<feature type="compositionally biased region" description="Pro residues" evidence="3">
    <location>
        <begin position="204"/>
        <end position="213"/>
    </location>
</feature>
<feature type="compositionally biased region" description="Low complexity" evidence="3">
    <location>
        <begin position="214"/>
        <end position="236"/>
    </location>
</feature>
<accession>O61707</accession>